<name>XERDL_STRA3</name>
<organism>
    <name type="scientific">Streptococcus agalactiae serotype III (strain NEM316)</name>
    <dbReference type="NCBI Taxonomy" id="211110"/>
    <lineage>
        <taxon>Bacteria</taxon>
        <taxon>Bacillati</taxon>
        <taxon>Bacillota</taxon>
        <taxon>Bacilli</taxon>
        <taxon>Lactobacillales</taxon>
        <taxon>Streptococcaceae</taxon>
        <taxon>Streptococcus</taxon>
    </lineage>
</organism>
<reference key="1">
    <citation type="journal article" date="2002" name="Mol. Microbiol.">
        <title>Genome sequence of Streptococcus agalactiae, a pathogen causing invasive neonatal disease.</title>
        <authorList>
            <person name="Glaser P."/>
            <person name="Rusniok C."/>
            <person name="Buchrieser C."/>
            <person name="Chevalier F."/>
            <person name="Frangeul L."/>
            <person name="Msadek T."/>
            <person name="Zouine M."/>
            <person name="Couve E."/>
            <person name="Lalioui L."/>
            <person name="Poyart C."/>
            <person name="Trieu-Cuot P."/>
            <person name="Kunst F."/>
        </authorList>
    </citation>
    <scope>NUCLEOTIDE SEQUENCE [LARGE SCALE GENOMIC DNA]</scope>
    <source>
        <strain>NEM316</strain>
    </source>
</reference>
<evidence type="ECO:0000255" key="1">
    <source>
        <dbReference type="HAMAP-Rule" id="MF_01817"/>
    </source>
</evidence>
<evidence type="ECO:0000255" key="2">
    <source>
        <dbReference type="PROSITE-ProRule" id="PRU01246"/>
    </source>
</evidence>
<evidence type="ECO:0000255" key="3">
    <source>
        <dbReference type="PROSITE-ProRule" id="PRU01248"/>
    </source>
</evidence>
<accession>Q8E3W1</accession>
<gene>
    <name type="ordered locus">gbs1645</name>
</gene>
<keyword id="KW-0963">Cytoplasm</keyword>
<keyword id="KW-0229">DNA integration</keyword>
<keyword id="KW-0233">DNA recombination</keyword>
<keyword id="KW-0238">DNA-binding</keyword>
<feature type="chain" id="PRO_0000095436" description="Tyrosine recombinase XerD-like">
    <location>
        <begin position="1"/>
        <end position="246"/>
    </location>
</feature>
<feature type="domain" description="Core-binding (CB)" evidence="3">
    <location>
        <begin position="1"/>
        <end position="72"/>
    </location>
</feature>
<feature type="domain" description="Tyr recombinase" evidence="2">
    <location>
        <begin position="84"/>
        <end position="246"/>
    </location>
</feature>
<feature type="active site" evidence="2">
    <location>
        <position position="149"/>
    </location>
</feature>
<feature type="active site" evidence="2">
    <location>
        <position position="212"/>
    </location>
</feature>
<feature type="active site" description="O-(3'-phospho-DNA)-tyrosine intermediate" evidence="2">
    <location>
        <position position="244"/>
    </location>
</feature>
<protein>
    <recommendedName>
        <fullName evidence="1">Tyrosine recombinase XerD-like</fullName>
    </recommendedName>
</protein>
<comment type="function">
    <text evidence="1">Putative tyrosine recombinase. Not involved in the cutting and rejoining of the recombining DNA molecules on dif(SL) site.</text>
</comment>
<comment type="subcellular location">
    <subcellularLocation>
        <location evidence="1">Cytoplasm</location>
    </subcellularLocation>
</comment>
<comment type="similarity">
    <text evidence="1">Belongs to the 'phage' integrase family. XerD-like subfamily.</text>
</comment>
<dbReference type="EMBL" id="AL766852">
    <property type="protein sequence ID" value="CAD47304.1"/>
    <property type="molecule type" value="Genomic_DNA"/>
</dbReference>
<dbReference type="SMR" id="Q8E3W1"/>
<dbReference type="KEGG" id="san:gbs1645"/>
<dbReference type="eggNOG" id="COG0582">
    <property type="taxonomic scope" value="Bacteria"/>
</dbReference>
<dbReference type="HOGENOM" id="CLU_1128554_0_0_9"/>
<dbReference type="Proteomes" id="UP000000823">
    <property type="component" value="Chromosome"/>
</dbReference>
<dbReference type="GO" id="GO:0005737">
    <property type="term" value="C:cytoplasm"/>
    <property type="evidence" value="ECO:0007669"/>
    <property type="project" value="UniProtKB-SubCell"/>
</dbReference>
<dbReference type="GO" id="GO:0003677">
    <property type="term" value="F:DNA binding"/>
    <property type="evidence" value="ECO:0007669"/>
    <property type="project" value="UniProtKB-KW"/>
</dbReference>
<dbReference type="GO" id="GO:0009037">
    <property type="term" value="F:tyrosine-based site-specific recombinase activity"/>
    <property type="evidence" value="ECO:0007669"/>
    <property type="project" value="UniProtKB-UniRule"/>
</dbReference>
<dbReference type="GO" id="GO:0006313">
    <property type="term" value="P:DNA transposition"/>
    <property type="evidence" value="ECO:0007669"/>
    <property type="project" value="UniProtKB-UniRule"/>
</dbReference>
<dbReference type="CDD" id="cd01190">
    <property type="entry name" value="INT_StrepXerD_C_like"/>
    <property type="match status" value="1"/>
</dbReference>
<dbReference type="Gene3D" id="1.10.443.10">
    <property type="entry name" value="Intergrase catalytic core"/>
    <property type="match status" value="1"/>
</dbReference>
<dbReference type="HAMAP" id="MF_01817">
    <property type="entry name" value="Recomb_XerD_like"/>
    <property type="match status" value="1"/>
</dbReference>
<dbReference type="InterPro" id="IPR044068">
    <property type="entry name" value="CB"/>
</dbReference>
<dbReference type="InterPro" id="IPR011010">
    <property type="entry name" value="DNA_brk_join_enz"/>
</dbReference>
<dbReference type="InterPro" id="IPR013762">
    <property type="entry name" value="Integrase-like_cat_sf"/>
</dbReference>
<dbReference type="InterPro" id="IPR002104">
    <property type="entry name" value="Integrase_catalytic"/>
</dbReference>
<dbReference type="InterPro" id="IPR020876">
    <property type="entry name" value="Tyrosine_recombinase_XerD-like"/>
</dbReference>
<dbReference type="NCBIfam" id="NF002685">
    <property type="entry name" value="PRK02436.1"/>
    <property type="match status" value="1"/>
</dbReference>
<dbReference type="Pfam" id="PF00589">
    <property type="entry name" value="Phage_integrase"/>
    <property type="match status" value="1"/>
</dbReference>
<dbReference type="SUPFAM" id="SSF56349">
    <property type="entry name" value="DNA breaking-rejoining enzymes"/>
    <property type="match status" value="1"/>
</dbReference>
<dbReference type="PROSITE" id="PS51900">
    <property type="entry name" value="CB"/>
    <property type="match status" value="1"/>
</dbReference>
<dbReference type="PROSITE" id="PS51898">
    <property type="entry name" value="TYR_RECOMBINASE"/>
    <property type="match status" value="1"/>
</dbReference>
<sequence>MINDINNFIESKKLSLNSRKSYHYDLKQFYKIIGGHVNSEKLALYQQSLSEFKLTARKRKLSAVNQFLFFLYNRGTLKEFYRLQETEKITLTQTKSQIMDLSNFYQDTDYPSGRLIALLILSLGLTPAEIANLKKADFDTTFNILSIEKSQMKRILKLPENLLPFLLESLEEDGDLVFEHNGKPYSRQWFFNQLTDFLNEKNEQQLTAQLLREQFILKQKENGKTMTELSRLLGLKTPITLERYYR</sequence>
<proteinExistence type="inferred from homology"/>